<accession>P52030</accession>
<accession>Q27867</accession>
<name>G6PI_DROSI</name>
<comment type="catalytic activity">
    <reaction>
        <text>alpha-D-glucose 6-phosphate = beta-D-fructose 6-phosphate</text>
        <dbReference type="Rhea" id="RHEA:11816"/>
        <dbReference type="ChEBI" id="CHEBI:57634"/>
        <dbReference type="ChEBI" id="CHEBI:58225"/>
        <dbReference type="EC" id="5.3.1.9"/>
    </reaction>
</comment>
<comment type="pathway">
    <text>Carbohydrate degradation; glycolysis; D-glyceraldehyde 3-phosphate and glycerone phosphate from D-glucose: step 2/4.</text>
</comment>
<comment type="subcellular location">
    <subcellularLocation>
        <location evidence="1">Cytoplasm</location>
    </subcellularLocation>
</comment>
<comment type="similarity">
    <text evidence="2">Belongs to the GPI family.</text>
</comment>
<keyword id="KW-0963">Cytoplasm</keyword>
<keyword id="KW-0312">Gluconeogenesis</keyword>
<keyword id="KW-0324">Glycolysis</keyword>
<keyword id="KW-0413">Isomerase</keyword>
<protein>
    <recommendedName>
        <fullName>Glucose-6-phosphate isomerase</fullName>
        <shortName>GPI</shortName>
        <ecNumber>5.3.1.9</ecNumber>
    </recommendedName>
    <alternativeName>
        <fullName>Phosphoglucose isomerase</fullName>
        <shortName>PGI</shortName>
    </alternativeName>
    <alternativeName>
        <fullName>Phosphohexose isomerase</fullName>
        <shortName>PHI</shortName>
    </alternativeName>
</protein>
<dbReference type="EC" id="5.3.1.9"/>
<dbReference type="EMBL" id="L27547">
    <property type="protein sequence ID" value="AAA28797.1"/>
    <property type="molecule type" value="Genomic_DNA"/>
</dbReference>
<dbReference type="EMBL" id="L27548">
    <property type="protein sequence ID" value="AAA28798.1"/>
    <property type="molecule type" value="Genomic_DNA"/>
</dbReference>
<dbReference type="EMBL" id="L27549">
    <property type="protein sequence ID" value="AAA28799.1"/>
    <property type="molecule type" value="Genomic_DNA"/>
</dbReference>
<dbReference type="EMBL" id="L27550">
    <property type="protein sequence ID" value="AAA28800.1"/>
    <property type="molecule type" value="Genomic_DNA"/>
</dbReference>
<dbReference type="EMBL" id="L27551">
    <property type="protein sequence ID" value="AAA28801.1"/>
    <property type="molecule type" value="Genomic_DNA"/>
</dbReference>
<dbReference type="EMBL" id="L27552">
    <property type="protein sequence ID" value="AAA28802.1"/>
    <property type="molecule type" value="Genomic_DNA"/>
</dbReference>
<dbReference type="EMBL" id="U20556">
    <property type="protein sequence ID" value="AAA63663.1"/>
    <property type="molecule type" value="Genomic_DNA"/>
</dbReference>
<dbReference type="EMBL" id="U20557">
    <property type="protein sequence ID" value="AAA63664.1"/>
    <property type="molecule type" value="Genomic_DNA"/>
</dbReference>
<dbReference type="EMBL" id="U20558">
    <property type="protein sequence ID" value="AAA63665.1"/>
    <property type="molecule type" value="Genomic_DNA"/>
</dbReference>
<dbReference type="EMBL" id="U20559">
    <property type="protein sequence ID" value="AAA63666.1"/>
    <property type="molecule type" value="Genomic_DNA"/>
</dbReference>
<dbReference type="EMBL" id="U20560">
    <property type="protein sequence ID" value="AAA63667.1"/>
    <property type="molecule type" value="Genomic_DNA"/>
</dbReference>
<dbReference type="EMBL" id="U20561">
    <property type="protein sequence ID" value="AAA63668.1"/>
    <property type="molecule type" value="Genomic_DNA"/>
</dbReference>
<dbReference type="EMBL" id="U20564">
    <property type="protein sequence ID" value="AAA63669.1"/>
    <property type="molecule type" value="Genomic_DNA"/>
</dbReference>
<dbReference type="EMBL" id="U20565">
    <property type="protein sequence ID" value="AAA63670.1"/>
    <property type="molecule type" value="Genomic_DNA"/>
</dbReference>
<dbReference type="SMR" id="P52030"/>
<dbReference type="GeneID" id="27208705"/>
<dbReference type="OrthoDB" id="5831190at2759"/>
<dbReference type="UniPathway" id="UPA00109">
    <property type="reaction ID" value="UER00181"/>
</dbReference>
<dbReference type="GO" id="GO:0005829">
    <property type="term" value="C:cytosol"/>
    <property type="evidence" value="ECO:0007669"/>
    <property type="project" value="TreeGrafter"/>
</dbReference>
<dbReference type="GO" id="GO:0097367">
    <property type="term" value="F:carbohydrate derivative binding"/>
    <property type="evidence" value="ECO:0007669"/>
    <property type="project" value="InterPro"/>
</dbReference>
<dbReference type="GO" id="GO:0004347">
    <property type="term" value="F:glucose-6-phosphate isomerase activity"/>
    <property type="evidence" value="ECO:0007669"/>
    <property type="project" value="UniProtKB-EC"/>
</dbReference>
<dbReference type="GO" id="GO:0048029">
    <property type="term" value="F:monosaccharide binding"/>
    <property type="evidence" value="ECO:0007669"/>
    <property type="project" value="TreeGrafter"/>
</dbReference>
<dbReference type="GO" id="GO:0006094">
    <property type="term" value="P:gluconeogenesis"/>
    <property type="evidence" value="ECO:0007669"/>
    <property type="project" value="UniProtKB-KW"/>
</dbReference>
<dbReference type="GO" id="GO:0051156">
    <property type="term" value="P:glucose 6-phosphate metabolic process"/>
    <property type="evidence" value="ECO:0007669"/>
    <property type="project" value="TreeGrafter"/>
</dbReference>
<dbReference type="GO" id="GO:0006096">
    <property type="term" value="P:glycolytic process"/>
    <property type="evidence" value="ECO:0007669"/>
    <property type="project" value="UniProtKB-UniPathway"/>
</dbReference>
<dbReference type="CDD" id="cd05015">
    <property type="entry name" value="SIS_PGI_1"/>
    <property type="match status" value="1"/>
</dbReference>
<dbReference type="CDD" id="cd05016">
    <property type="entry name" value="SIS_PGI_2"/>
    <property type="match status" value="1"/>
</dbReference>
<dbReference type="FunFam" id="1.10.1390.10:FF:000001">
    <property type="entry name" value="Glucose-6-phosphate isomerase"/>
    <property type="match status" value="1"/>
</dbReference>
<dbReference type="FunFam" id="3.40.50.10490:FF:000004">
    <property type="entry name" value="Glucose-6-phosphate isomerase"/>
    <property type="match status" value="1"/>
</dbReference>
<dbReference type="Gene3D" id="1.10.1390.10">
    <property type="match status" value="1"/>
</dbReference>
<dbReference type="Gene3D" id="3.40.50.10490">
    <property type="entry name" value="Glucose-6-phosphate isomerase like protein, domain 1"/>
    <property type="match status" value="2"/>
</dbReference>
<dbReference type="HAMAP" id="MF_00473">
    <property type="entry name" value="G6P_isomerase"/>
    <property type="match status" value="1"/>
</dbReference>
<dbReference type="InterPro" id="IPR001672">
    <property type="entry name" value="G6P_Isomerase"/>
</dbReference>
<dbReference type="InterPro" id="IPR023096">
    <property type="entry name" value="G6P_Isomerase_C"/>
</dbReference>
<dbReference type="InterPro" id="IPR018189">
    <property type="entry name" value="Phosphoglucose_isomerase_CS"/>
</dbReference>
<dbReference type="InterPro" id="IPR046348">
    <property type="entry name" value="SIS_dom_sf"/>
</dbReference>
<dbReference type="InterPro" id="IPR035476">
    <property type="entry name" value="SIS_PGI_1"/>
</dbReference>
<dbReference type="InterPro" id="IPR035482">
    <property type="entry name" value="SIS_PGI_2"/>
</dbReference>
<dbReference type="NCBIfam" id="NF001211">
    <property type="entry name" value="PRK00179.1"/>
    <property type="match status" value="1"/>
</dbReference>
<dbReference type="PANTHER" id="PTHR11469">
    <property type="entry name" value="GLUCOSE-6-PHOSPHATE ISOMERASE"/>
    <property type="match status" value="1"/>
</dbReference>
<dbReference type="PANTHER" id="PTHR11469:SF1">
    <property type="entry name" value="GLUCOSE-6-PHOSPHATE ISOMERASE"/>
    <property type="match status" value="1"/>
</dbReference>
<dbReference type="Pfam" id="PF00342">
    <property type="entry name" value="PGI"/>
    <property type="match status" value="1"/>
</dbReference>
<dbReference type="PRINTS" id="PR00662">
    <property type="entry name" value="G6PISOMERASE"/>
</dbReference>
<dbReference type="SUPFAM" id="SSF53697">
    <property type="entry name" value="SIS domain"/>
    <property type="match status" value="1"/>
</dbReference>
<dbReference type="PROSITE" id="PS00765">
    <property type="entry name" value="P_GLUCOSE_ISOMERASE_1"/>
    <property type="match status" value="1"/>
</dbReference>
<dbReference type="PROSITE" id="PS00174">
    <property type="entry name" value="P_GLUCOSE_ISOMERASE_2"/>
    <property type="match status" value="1"/>
</dbReference>
<dbReference type="PROSITE" id="PS51463">
    <property type="entry name" value="P_GLUCOSE_ISOMERASE_3"/>
    <property type="match status" value="1"/>
</dbReference>
<evidence type="ECO:0000250" key="1"/>
<evidence type="ECO:0000305" key="2"/>
<gene>
    <name type="primary">Pgi</name>
</gene>
<proteinExistence type="inferred from homology"/>
<sequence length="558" mass="62349">MAGPLPPLNQEPAFQKLQEYYDSKAKDLNIKDLFVKDSKRFSKYSLRLHTQNDGEILLDYSKNRINDEVWDLLLALAKVRRVNAARDAMFSGQHINITENRAVLHTALRNRGTDPVLVDDKDVMPDVRAELAHMKEFTNMVISGVWRGCTGKQITDVVNIGIGGSDLGPLMVTEALKPYGKGLHSHFVSNIDGTHLAEVLKKVNYETTLFIVASKTFTTQETITNATSAKTWLLEHSKEPESVAKHFVALSTNKEKVTEFGIDSTNMFGFWDWVGGRYSLWSAIGLSICLSIGFENFEQLLDGAHFMDNHFKTTPFEKNAPVILALLGVWYSNFFKAETHALLPYDQYLHRFAAYFQQGDMESNGKFVSKSGKPVKYSTGPIVWGEPGTNGQHAFYQLIHQGTRLIPCDFIAPAQTHNPIAGGKHHKILLSNFLAQTEALMAGKTVDEARTELSKAGLCGNELDNLLPHKVFVGNRPTNSIVVKKVSPFTLGALIALYEHKIFVQGIIWDINSFDQWGVELGKQLAKAIEPELDHCNEVSTHDSSTNGLINFIKANWK</sequence>
<reference key="1">
    <citation type="submission" date="1994-03" db="EMBL/GenBank/DDBJ databases">
        <authorList>
            <person name="McDonald J.H."/>
            <person name="Kreitman M.E."/>
        </authorList>
    </citation>
    <scope>NUCLEOTIDE SEQUENCE [GENOMIC DNA]</scope>
    <source>
        <strain>Various strains</strain>
    </source>
</reference>
<feature type="chain" id="PRO_0000180544" description="Glucose-6-phosphate isomerase">
    <location>
        <begin position="1"/>
        <end position="558"/>
    </location>
</feature>
<feature type="active site" description="Proton donor" evidence="1">
    <location>
        <position position="362"/>
    </location>
</feature>
<feature type="active site" evidence="1">
    <location>
        <position position="393"/>
    </location>
</feature>
<feature type="active site" evidence="1">
    <location>
        <position position="523"/>
    </location>
</feature>
<feature type="sequence variant" description="In strain: various strains.">
    <original>P</original>
    <variation>A</variation>
    <location>
        <position position="12"/>
    </location>
</feature>
<feature type="sequence variant" description="In strain: various strains.">
    <original>A</original>
    <variation>G</variation>
    <location>
        <position position="25"/>
    </location>
</feature>
<organism>
    <name type="scientific">Drosophila simulans</name>
    <name type="common">Fruit fly</name>
    <dbReference type="NCBI Taxonomy" id="7240"/>
    <lineage>
        <taxon>Eukaryota</taxon>
        <taxon>Metazoa</taxon>
        <taxon>Ecdysozoa</taxon>
        <taxon>Arthropoda</taxon>
        <taxon>Hexapoda</taxon>
        <taxon>Insecta</taxon>
        <taxon>Pterygota</taxon>
        <taxon>Neoptera</taxon>
        <taxon>Endopterygota</taxon>
        <taxon>Diptera</taxon>
        <taxon>Brachycera</taxon>
        <taxon>Muscomorpha</taxon>
        <taxon>Ephydroidea</taxon>
        <taxon>Drosophilidae</taxon>
        <taxon>Drosophila</taxon>
        <taxon>Sophophora</taxon>
    </lineage>
</organism>